<keyword id="KW-0067">ATP-binding</keyword>
<keyword id="KW-0227">DNA damage</keyword>
<keyword id="KW-0234">DNA repair</keyword>
<keyword id="KW-0238">DNA-binding</keyword>
<keyword id="KW-0460">Magnesium</keyword>
<keyword id="KW-0547">Nucleotide-binding</keyword>
<keyword id="KW-0548">Nucleotidyltransferase</keyword>
<keyword id="KW-0808">Transferase</keyword>
<dbReference type="EC" id="2.7.7.85" evidence="1"/>
<dbReference type="EMBL" id="CP000001">
    <property type="protein sequence ID" value="AAU20151.1"/>
    <property type="molecule type" value="Genomic_DNA"/>
</dbReference>
<dbReference type="RefSeq" id="WP_000392168.1">
    <property type="nucleotide sequence ID" value="NZ_CP009968.1"/>
</dbReference>
<dbReference type="SMR" id="Q63HB6"/>
<dbReference type="GeneID" id="93010970"/>
<dbReference type="KEGG" id="bcz:BCE33L0079"/>
<dbReference type="PATRIC" id="fig|288681.22.peg.73"/>
<dbReference type="Proteomes" id="UP000002612">
    <property type="component" value="Chromosome"/>
</dbReference>
<dbReference type="GO" id="GO:0004016">
    <property type="term" value="F:adenylate cyclase activity"/>
    <property type="evidence" value="ECO:0007669"/>
    <property type="project" value="TreeGrafter"/>
</dbReference>
<dbReference type="GO" id="GO:0005524">
    <property type="term" value="F:ATP binding"/>
    <property type="evidence" value="ECO:0007669"/>
    <property type="project" value="UniProtKB-UniRule"/>
</dbReference>
<dbReference type="GO" id="GO:0106408">
    <property type="term" value="F:diadenylate cyclase activity"/>
    <property type="evidence" value="ECO:0007669"/>
    <property type="project" value="UniProtKB-EC"/>
</dbReference>
<dbReference type="GO" id="GO:0003677">
    <property type="term" value="F:DNA binding"/>
    <property type="evidence" value="ECO:0007669"/>
    <property type="project" value="UniProtKB-UniRule"/>
</dbReference>
<dbReference type="GO" id="GO:0006281">
    <property type="term" value="P:DNA repair"/>
    <property type="evidence" value="ECO:0007669"/>
    <property type="project" value="UniProtKB-UniRule"/>
</dbReference>
<dbReference type="FunFam" id="1.10.150.20:FF:000023">
    <property type="entry name" value="DNA integrity scanning protein DisA"/>
    <property type="match status" value="1"/>
</dbReference>
<dbReference type="FunFam" id="1.20.1260.110:FF:000001">
    <property type="entry name" value="DNA integrity scanning protein DisA"/>
    <property type="match status" value="1"/>
</dbReference>
<dbReference type="FunFam" id="3.40.1700.10:FF:000001">
    <property type="entry name" value="DNA integrity scanning protein DisA"/>
    <property type="match status" value="1"/>
</dbReference>
<dbReference type="Gene3D" id="1.10.150.20">
    <property type="entry name" value="5' to 3' exonuclease, C-terminal subdomain"/>
    <property type="match status" value="1"/>
</dbReference>
<dbReference type="Gene3D" id="1.20.1260.110">
    <property type="entry name" value="DNA integrity scanning linker region"/>
    <property type="match status" value="1"/>
</dbReference>
<dbReference type="Gene3D" id="3.40.1700.10">
    <property type="entry name" value="DNA integrity scanning protein, DisA, N-terminal domain"/>
    <property type="match status" value="1"/>
</dbReference>
<dbReference type="HAMAP" id="MF_01438">
    <property type="entry name" value="DisA"/>
    <property type="match status" value="1"/>
</dbReference>
<dbReference type="InterPro" id="IPR050338">
    <property type="entry name" value="DisA"/>
</dbReference>
<dbReference type="InterPro" id="IPR038331">
    <property type="entry name" value="DisA_sf"/>
</dbReference>
<dbReference type="InterPro" id="IPR036888">
    <property type="entry name" value="DNA_integrity_DisA_N_sf"/>
</dbReference>
<dbReference type="InterPro" id="IPR018906">
    <property type="entry name" value="DNA_integrity_scan_DisA_link"/>
</dbReference>
<dbReference type="InterPro" id="IPR003390">
    <property type="entry name" value="DNA_integrity_scan_DisA_N"/>
</dbReference>
<dbReference type="InterPro" id="IPR023763">
    <property type="entry name" value="DNA_integrity_scanning_protein"/>
</dbReference>
<dbReference type="InterPro" id="IPR010994">
    <property type="entry name" value="RuvA_2-like"/>
</dbReference>
<dbReference type="NCBIfam" id="NF010009">
    <property type="entry name" value="PRK13482.1"/>
    <property type="match status" value="1"/>
</dbReference>
<dbReference type="PANTHER" id="PTHR34185">
    <property type="entry name" value="DIADENYLATE CYCLASE"/>
    <property type="match status" value="1"/>
</dbReference>
<dbReference type="PANTHER" id="PTHR34185:SF3">
    <property type="entry name" value="DNA INTEGRITY SCANNING PROTEIN DISA"/>
    <property type="match status" value="1"/>
</dbReference>
<dbReference type="Pfam" id="PF02457">
    <property type="entry name" value="DAC"/>
    <property type="match status" value="1"/>
</dbReference>
<dbReference type="Pfam" id="PF10635">
    <property type="entry name" value="DisA-linker"/>
    <property type="match status" value="1"/>
</dbReference>
<dbReference type="SUPFAM" id="SSF47781">
    <property type="entry name" value="RuvA domain 2-like"/>
    <property type="match status" value="1"/>
</dbReference>
<dbReference type="SUPFAM" id="SSF143597">
    <property type="entry name" value="YojJ-like"/>
    <property type="match status" value="1"/>
</dbReference>
<dbReference type="PROSITE" id="PS51794">
    <property type="entry name" value="DAC"/>
    <property type="match status" value="1"/>
</dbReference>
<sequence length="357" mass="40095">MEENKQRVKSMINILQLVAPGTPLREGIDNVLRAQTGGLIVLGYNEQIKSIVDGGFHINCAFSPASLYELAKMDGALILNETGSKILIANAQLVPESSIDSIETGMRHRTAERVAKQTGSLVVAISQRRNVITLYQGNLRYTLKDIGVILTKANQAIQTLEKYKAVWNDGITNLGILEFEEVVTMSEVVHVLHSVEMVLRIKNEILSYIHELGTEGRLIRLQLTELLADLEAEAALLIKDYYQEKTQDHHQILKKLQELANTQLLEDSDLVKLLGYPGQTSLEESVTPRGYRITSKISRVPPLIIENLINRFKTLQGVCRATINELDDVEGIGEVRAKKIREGLKRIQEHLYMSRHN</sequence>
<feature type="chain" id="PRO_0000255634" description="DNA integrity scanning protein DisA">
    <location>
        <begin position="1"/>
        <end position="357"/>
    </location>
</feature>
<feature type="domain" description="DAC" evidence="2">
    <location>
        <begin position="8"/>
        <end position="146"/>
    </location>
</feature>
<feature type="binding site" evidence="1">
    <location>
        <position position="75"/>
    </location>
    <ligand>
        <name>ATP</name>
        <dbReference type="ChEBI" id="CHEBI:30616"/>
    </ligand>
</feature>
<feature type="binding site" evidence="1">
    <location>
        <position position="93"/>
    </location>
    <ligand>
        <name>ATP</name>
        <dbReference type="ChEBI" id="CHEBI:30616"/>
    </ligand>
</feature>
<feature type="binding site" evidence="1">
    <location>
        <begin position="106"/>
        <end position="110"/>
    </location>
    <ligand>
        <name>ATP</name>
        <dbReference type="ChEBI" id="CHEBI:30616"/>
    </ligand>
</feature>
<accession>Q63HB6</accession>
<protein>
    <recommendedName>
        <fullName evidence="1">DNA integrity scanning protein DisA</fullName>
    </recommendedName>
    <alternativeName>
        <fullName evidence="1">Cyclic di-AMP synthase</fullName>
        <shortName evidence="1">c-di-AMP synthase</shortName>
    </alternativeName>
    <alternativeName>
        <fullName evidence="1">Diadenylate cyclase</fullName>
        <ecNumber evidence="1">2.7.7.85</ecNumber>
    </alternativeName>
</protein>
<evidence type="ECO:0000255" key="1">
    <source>
        <dbReference type="HAMAP-Rule" id="MF_01438"/>
    </source>
</evidence>
<evidence type="ECO:0000255" key="2">
    <source>
        <dbReference type="PROSITE-ProRule" id="PRU01130"/>
    </source>
</evidence>
<organism>
    <name type="scientific">Bacillus cereus (strain ZK / E33L)</name>
    <dbReference type="NCBI Taxonomy" id="288681"/>
    <lineage>
        <taxon>Bacteria</taxon>
        <taxon>Bacillati</taxon>
        <taxon>Bacillota</taxon>
        <taxon>Bacilli</taxon>
        <taxon>Bacillales</taxon>
        <taxon>Bacillaceae</taxon>
        <taxon>Bacillus</taxon>
        <taxon>Bacillus cereus group</taxon>
    </lineage>
</organism>
<comment type="function">
    <text evidence="1">Participates in a DNA-damage check-point that is active prior to asymmetric division when DNA is damaged. DisA forms globular foci that rapidly scan along the chromosomes during sporulation, searching for lesions. When a lesion is present, DisA pauses at the lesion site. This triggers a cellular response that culminates in a temporary block in sporulation initiation.</text>
</comment>
<comment type="function">
    <text evidence="1">Also has diadenylate cyclase activity, catalyzing the condensation of 2 ATP molecules into cyclic di-AMP (c-di-AMP). c-di-AMP acts as a signaling molecule that couples DNA integrity with progression of sporulation. The rise in c-di-AMP level generated by DisA while scanning the chromosome, operates as a positive signal that advances sporulation; upon encountering a lesion, the DisA focus arrests at the damaged site and halts c-di-AMP synthesis.</text>
</comment>
<comment type="catalytic activity">
    <reaction evidence="1">
        <text>2 ATP = 3',3'-c-di-AMP + 2 diphosphate</text>
        <dbReference type="Rhea" id="RHEA:35655"/>
        <dbReference type="ChEBI" id="CHEBI:30616"/>
        <dbReference type="ChEBI" id="CHEBI:33019"/>
        <dbReference type="ChEBI" id="CHEBI:71500"/>
        <dbReference type="EC" id="2.7.7.85"/>
    </reaction>
</comment>
<comment type="cofactor">
    <cofactor evidence="1">
        <name>Mg(2+)</name>
        <dbReference type="ChEBI" id="CHEBI:18420"/>
    </cofactor>
</comment>
<comment type="subunit">
    <text evidence="1">Homooctamer.</text>
</comment>
<comment type="similarity">
    <text evidence="1">Belongs to the DisA family.</text>
</comment>
<gene>
    <name evidence="1" type="primary">disA</name>
    <name type="ordered locus">BCE33L0079</name>
</gene>
<reference key="1">
    <citation type="journal article" date="2006" name="J. Bacteriol.">
        <title>Pathogenomic sequence analysis of Bacillus cereus and Bacillus thuringiensis isolates closely related to Bacillus anthracis.</title>
        <authorList>
            <person name="Han C.S."/>
            <person name="Xie G."/>
            <person name="Challacombe J.F."/>
            <person name="Altherr M.R."/>
            <person name="Bhotika S.S."/>
            <person name="Bruce D."/>
            <person name="Campbell C.S."/>
            <person name="Campbell M.L."/>
            <person name="Chen J."/>
            <person name="Chertkov O."/>
            <person name="Cleland C."/>
            <person name="Dimitrijevic M."/>
            <person name="Doggett N.A."/>
            <person name="Fawcett J.J."/>
            <person name="Glavina T."/>
            <person name="Goodwin L.A."/>
            <person name="Hill K.K."/>
            <person name="Hitchcock P."/>
            <person name="Jackson P.J."/>
            <person name="Keim P."/>
            <person name="Kewalramani A.R."/>
            <person name="Longmire J."/>
            <person name="Lucas S."/>
            <person name="Malfatti S."/>
            <person name="McMurry K."/>
            <person name="Meincke L.J."/>
            <person name="Misra M."/>
            <person name="Moseman B.L."/>
            <person name="Mundt M."/>
            <person name="Munk A.C."/>
            <person name="Okinaka R.T."/>
            <person name="Parson-Quintana B."/>
            <person name="Reilly L.P."/>
            <person name="Richardson P."/>
            <person name="Robinson D.L."/>
            <person name="Rubin E."/>
            <person name="Saunders E."/>
            <person name="Tapia R."/>
            <person name="Tesmer J.G."/>
            <person name="Thayer N."/>
            <person name="Thompson L.S."/>
            <person name="Tice H."/>
            <person name="Ticknor L.O."/>
            <person name="Wills P.L."/>
            <person name="Brettin T.S."/>
            <person name="Gilna P."/>
        </authorList>
    </citation>
    <scope>NUCLEOTIDE SEQUENCE [LARGE SCALE GENOMIC DNA]</scope>
    <source>
        <strain>ZK / E33L</strain>
    </source>
</reference>
<proteinExistence type="inferred from homology"/>
<name>DISA_BACCZ</name>